<organism>
    <name type="scientific">Zea mays</name>
    <name type="common">Maize</name>
    <dbReference type="NCBI Taxonomy" id="4577"/>
    <lineage>
        <taxon>Eukaryota</taxon>
        <taxon>Viridiplantae</taxon>
        <taxon>Streptophyta</taxon>
        <taxon>Embryophyta</taxon>
        <taxon>Tracheophyta</taxon>
        <taxon>Spermatophyta</taxon>
        <taxon>Magnoliopsida</taxon>
        <taxon>Liliopsida</taxon>
        <taxon>Poales</taxon>
        <taxon>Poaceae</taxon>
        <taxon>PACMAD clade</taxon>
        <taxon>Panicoideae</taxon>
        <taxon>Andropogonodae</taxon>
        <taxon>Andropogoneae</taxon>
        <taxon>Tripsacinae</taxon>
        <taxon>Zea</taxon>
    </lineage>
</organism>
<keyword id="KW-0002">3D-structure</keyword>
<keyword id="KW-0963">Cytoplasm</keyword>
<keyword id="KW-0378">Hydrolase</keyword>
<keyword id="KW-0611">Plant defense</keyword>
<keyword id="KW-0652">Protein synthesis inhibitor</keyword>
<keyword id="KW-1185">Reference proteome</keyword>
<keyword id="KW-0800">Toxin</keyword>
<accession>P25891</accession>
<name>RIP3_MAIZE</name>
<protein>
    <recommendedName>
        <fullName>Ribosome-inactivating protein 3</fullName>
    </recommendedName>
    <alternativeName>
        <fullName>B-32 protein</fullName>
    </alternativeName>
    <alternativeName>
        <fullName>rRNA N-glycosidase</fullName>
        <ecNumber>3.2.2.22</ecNumber>
    </alternativeName>
</protein>
<gene>
    <name type="primary">CRIP3</name>
</gene>
<feature type="chain" id="PRO_0000221404" description="Ribosome-inactivating protein 3">
    <location>
        <begin position="1"/>
        <end position="300"/>
    </location>
</feature>
<feature type="active site" evidence="1">
    <location>
        <position position="207"/>
    </location>
</feature>
<feature type="strand" evidence="3">
    <location>
        <begin position="23"/>
        <end position="28"/>
    </location>
</feature>
<feature type="helix" evidence="3">
    <location>
        <begin position="36"/>
        <end position="48"/>
    </location>
</feature>
<feature type="strand" evidence="3">
    <location>
        <begin position="71"/>
        <end position="78"/>
    </location>
</feature>
<feature type="strand" evidence="3">
    <location>
        <begin position="83"/>
        <end position="89"/>
    </location>
</feature>
<feature type="turn" evidence="3">
    <location>
        <begin position="90"/>
        <end position="92"/>
    </location>
</feature>
<feature type="strand" evidence="3">
    <location>
        <begin position="95"/>
        <end position="99"/>
    </location>
</feature>
<feature type="strand" evidence="3">
    <location>
        <begin position="105"/>
        <end position="109"/>
    </location>
</feature>
<feature type="helix" evidence="3">
    <location>
        <begin position="130"/>
        <end position="133"/>
    </location>
</feature>
<feature type="helix" evidence="3">
    <location>
        <begin position="139"/>
        <end position="141"/>
    </location>
</feature>
<feature type="helix" evidence="3">
    <location>
        <begin position="146"/>
        <end position="156"/>
    </location>
</feature>
<feature type="helix" evidence="3">
    <location>
        <begin position="180"/>
        <end position="188"/>
    </location>
</feature>
<feature type="helix" evidence="3">
    <location>
        <begin position="192"/>
        <end position="204"/>
    </location>
</feature>
<feature type="helix" evidence="3">
    <location>
        <begin position="206"/>
        <end position="210"/>
    </location>
</feature>
<feature type="helix" evidence="3">
    <location>
        <begin position="212"/>
        <end position="220"/>
    </location>
</feature>
<feature type="turn" evidence="3">
    <location>
        <begin position="221"/>
        <end position="223"/>
    </location>
</feature>
<feature type="helix" evidence="3">
    <location>
        <begin position="232"/>
        <end position="238"/>
    </location>
</feature>
<feature type="helix" evidence="3">
    <location>
        <begin position="241"/>
        <end position="253"/>
    </location>
</feature>
<feature type="helix" evidence="3">
    <location>
        <begin position="260"/>
        <end position="263"/>
    </location>
</feature>
<feature type="turn" evidence="3">
    <location>
        <begin position="264"/>
        <end position="266"/>
    </location>
</feature>
<feature type="helix" evidence="3">
    <location>
        <begin position="270"/>
        <end position="273"/>
    </location>
</feature>
<feature type="turn" evidence="3">
    <location>
        <begin position="274"/>
        <end position="276"/>
    </location>
</feature>
<feature type="strand" evidence="3">
    <location>
        <begin position="277"/>
        <end position="280"/>
    </location>
</feature>
<proteinExistence type="evidence at protein level"/>
<evidence type="ECO:0000250" key="1"/>
<evidence type="ECO:0000305" key="2"/>
<evidence type="ECO:0007829" key="3">
    <source>
        <dbReference type="PDB" id="2PQG"/>
    </source>
</evidence>
<comment type="function">
    <text>Possesses features of some constitutive defense agent. The coordinate Opaque-2-controlled synthesis of this protein and the major seed storage proteins (zeins) may provide the germinating seedling with both nutritional benefits and protection against pathogen invasion of the surrounding endosperm.</text>
</comment>
<comment type="catalytic activity">
    <reaction>
        <text>Endohydrolysis of the N-glycosidic bond at one specific adenosine on the 28S rRNA.</text>
        <dbReference type="EC" id="3.2.2.22"/>
    </reaction>
</comment>
<comment type="subunit">
    <text>Monomer.</text>
</comment>
<comment type="subcellular location">
    <subcellularLocation>
        <location>Cytoplasm</location>
    </subcellularLocation>
</comment>
<comment type="tissue specificity">
    <text>Accumulates to high levels in seeds.</text>
</comment>
<comment type="similarity">
    <text evidence="2">Belongs to the ribosome-inactivating protein family. Type 1 RIP subfamily.</text>
</comment>
<sequence length="300" mass="33257">MAEITLEPSDLMAQTNKRIVPKFTEIFPVEDANYPYSAFIASVRKDVIKHCTDHKGIFQPVLPPEKKVPELWLYTELKTRTSSITLAIRMDNLYLVGFRTPGGVWWEFGKDGDTHLLGDNPRWLGFGGRYQDLIGNKGLETVTMGRAEMTRAVNDLAKKKKMATLEEEEVQMQMQMPEAADLAAAAAADPQADTKSKLVKLVVMVCEGLRFNTVSRTVDAGFNSQHGVTLTVTQGKQVQKWDRISKAAFEWADHPTAVIPDMQKLGIKDKNEAARIVALVKNQTTACATAASADNDDDEA</sequence>
<reference key="1">
    <citation type="journal article" date="1992" name="Plant Cell">
        <title>A maize ribosome-inactivating protein is controlled by the transcriptional activator Opaque-2.</title>
        <authorList>
            <person name="Bass H.W."/>
            <person name="Webster C."/>
            <person name="Obrian G.R."/>
            <person name="Roberts J.K.M."/>
            <person name="Boston R.S."/>
        </authorList>
    </citation>
    <scope>NUCLEOTIDE SEQUENCE [MRNA]</scope>
</reference>
<dbReference type="EC" id="3.2.2.22"/>
<dbReference type="EMBL" id="M83926">
    <property type="protein sequence ID" value="AAA33453.1"/>
    <property type="molecule type" value="mRNA"/>
</dbReference>
<dbReference type="PDB" id="2PQG">
    <property type="method" value="X-ray"/>
    <property type="resolution" value="2.38 A"/>
    <property type="chains" value="A/B=22-286"/>
</dbReference>
<dbReference type="PDBsum" id="2PQG"/>
<dbReference type="SMR" id="P25891"/>
<dbReference type="FunCoup" id="P25891">
    <property type="interactions" value="12"/>
</dbReference>
<dbReference type="STRING" id="4577.P25891"/>
<dbReference type="PaxDb" id="4577-GRMZM2G063536_P01"/>
<dbReference type="MaizeGDB" id="30000"/>
<dbReference type="InParanoid" id="P25891"/>
<dbReference type="BRENDA" id="3.2.2.22">
    <property type="organism ID" value="6752"/>
</dbReference>
<dbReference type="EvolutionaryTrace" id="P25891"/>
<dbReference type="Proteomes" id="UP000007305">
    <property type="component" value="Unplaced"/>
</dbReference>
<dbReference type="ExpressionAtlas" id="P25891">
    <property type="expression patterns" value="baseline and differential"/>
</dbReference>
<dbReference type="GO" id="GO:0005737">
    <property type="term" value="C:cytoplasm"/>
    <property type="evidence" value="ECO:0007669"/>
    <property type="project" value="UniProtKB-SubCell"/>
</dbReference>
<dbReference type="GO" id="GO:0030598">
    <property type="term" value="F:rRNA N-glycosylase activity"/>
    <property type="evidence" value="ECO:0007669"/>
    <property type="project" value="UniProtKB-EC"/>
</dbReference>
<dbReference type="GO" id="GO:0090729">
    <property type="term" value="F:toxin activity"/>
    <property type="evidence" value="ECO:0007669"/>
    <property type="project" value="UniProtKB-KW"/>
</dbReference>
<dbReference type="GO" id="GO:0006952">
    <property type="term" value="P:defense response"/>
    <property type="evidence" value="ECO:0007669"/>
    <property type="project" value="UniProtKB-KW"/>
</dbReference>
<dbReference type="GO" id="GO:0017148">
    <property type="term" value="P:negative regulation of translation"/>
    <property type="evidence" value="ECO:0007669"/>
    <property type="project" value="UniProtKB-KW"/>
</dbReference>
<dbReference type="DisProt" id="DP02707"/>
<dbReference type="Gene3D" id="3.40.420.10">
    <property type="entry name" value="Ricin (A subunit), domain 1"/>
    <property type="match status" value="1"/>
</dbReference>
<dbReference type="Gene3D" id="4.10.470.10">
    <property type="entry name" value="Ricin (A Subunit), domain 2"/>
    <property type="match status" value="1"/>
</dbReference>
<dbReference type="InterPro" id="IPR036041">
    <property type="entry name" value="Ribosome-inact_prot_sf"/>
</dbReference>
<dbReference type="InterPro" id="IPR017989">
    <property type="entry name" value="Ribosome_inactivat_1/2"/>
</dbReference>
<dbReference type="InterPro" id="IPR001574">
    <property type="entry name" value="Ribosome_inactivat_prot"/>
</dbReference>
<dbReference type="InterPro" id="IPR017988">
    <property type="entry name" value="Ribosome_inactivat_prot_CS"/>
</dbReference>
<dbReference type="InterPro" id="IPR016138">
    <property type="entry name" value="Ribosome_inactivat_prot_sub1"/>
</dbReference>
<dbReference type="InterPro" id="IPR016139">
    <property type="entry name" value="Ribosome_inactivat_prot_sub2"/>
</dbReference>
<dbReference type="PANTHER" id="PTHR33453">
    <property type="match status" value="1"/>
</dbReference>
<dbReference type="PANTHER" id="PTHR33453:SF9">
    <property type="entry name" value="ALBUMIN B-32"/>
    <property type="match status" value="1"/>
</dbReference>
<dbReference type="Pfam" id="PF00161">
    <property type="entry name" value="RIP"/>
    <property type="match status" value="1"/>
</dbReference>
<dbReference type="PRINTS" id="PR00396">
    <property type="entry name" value="SHIGARICIN"/>
</dbReference>
<dbReference type="SUPFAM" id="SSF56371">
    <property type="entry name" value="Ribosome inactivating proteins (RIP)"/>
    <property type="match status" value="1"/>
</dbReference>
<dbReference type="PROSITE" id="PS00275">
    <property type="entry name" value="SHIGA_RICIN"/>
    <property type="match status" value="1"/>
</dbReference>